<proteinExistence type="inferred from homology"/>
<reference key="1">
    <citation type="journal article" date="2005" name="Nucleic Acids Res.">
        <title>Genome dynamics and diversity of Shigella species, the etiologic agents of bacillary dysentery.</title>
        <authorList>
            <person name="Yang F."/>
            <person name="Yang J."/>
            <person name="Zhang X."/>
            <person name="Chen L."/>
            <person name="Jiang Y."/>
            <person name="Yan Y."/>
            <person name="Tang X."/>
            <person name="Wang J."/>
            <person name="Xiong Z."/>
            <person name="Dong J."/>
            <person name="Xue Y."/>
            <person name="Zhu Y."/>
            <person name="Xu X."/>
            <person name="Sun L."/>
            <person name="Chen S."/>
            <person name="Nie H."/>
            <person name="Peng J."/>
            <person name="Xu J."/>
            <person name="Wang Y."/>
            <person name="Yuan Z."/>
            <person name="Wen Y."/>
            <person name="Yao Z."/>
            <person name="Shen Y."/>
            <person name="Qiang B."/>
            <person name="Hou Y."/>
            <person name="Yu J."/>
            <person name="Jin Q."/>
        </authorList>
    </citation>
    <scope>NUCLEOTIDE SEQUENCE [LARGE SCALE GENOMIC DNA]</scope>
    <source>
        <strain>Sd197</strain>
    </source>
</reference>
<evidence type="ECO:0000255" key="1">
    <source>
        <dbReference type="HAMAP-Rule" id="MF_00185"/>
    </source>
</evidence>
<name>MIAA_SHIDS</name>
<protein>
    <recommendedName>
        <fullName evidence="1">tRNA dimethylallyltransferase</fullName>
        <ecNumber evidence="1">2.5.1.75</ecNumber>
    </recommendedName>
    <alternativeName>
        <fullName evidence="1">Dimethylallyl diphosphate:tRNA dimethylallyltransferase</fullName>
        <shortName evidence="1">DMAPP:tRNA dimethylallyltransferase</shortName>
        <shortName evidence="1">DMATase</shortName>
    </alternativeName>
    <alternativeName>
        <fullName evidence="1">Isopentenyl-diphosphate:tRNA isopentenyltransferase</fullName>
        <shortName evidence="1">IPP transferase</shortName>
        <shortName evidence="1">IPPT</shortName>
        <shortName evidence="1">IPTase</shortName>
    </alternativeName>
</protein>
<dbReference type="EC" id="2.5.1.75" evidence="1"/>
<dbReference type="EMBL" id="CP000034">
    <property type="protein sequence ID" value="ABB64305.1"/>
    <property type="molecule type" value="Genomic_DNA"/>
</dbReference>
<dbReference type="RefSeq" id="WP_001280343.1">
    <property type="nucleotide sequence ID" value="NC_007606.1"/>
</dbReference>
<dbReference type="RefSeq" id="YP_405796.1">
    <property type="nucleotide sequence ID" value="NC_007606.1"/>
</dbReference>
<dbReference type="SMR" id="Q328F0"/>
<dbReference type="STRING" id="300267.SDY_4418"/>
<dbReference type="EnsemblBacteria" id="ABB64305">
    <property type="protein sequence ID" value="ABB64305"/>
    <property type="gene ID" value="SDY_4418"/>
</dbReference>
<dbReference type="KEGG" id="sdy:SDY_4418"/>
<dbReference type="PATRIC" id="fig|300267.13.peg.5216"/>
<dbReference type="HOGENOM" id="CLU_032616_0_0_6"/>
<dbReference type="Proteomes" id="UP000002716">
    <property type="component" value="Chromosome"/>
</dbReference>
<dbReference type="GO" id="GO:0005524">
    <property type="term" value="F:ATP binding"/>
    <property type="evidence" value="ECO:0007669"/>
    <property type="project" value="UniProtKB-UniRule"/>
</dbReference>
<dbReference type="GO" id="GO:0052381">
    <property type="term" value="F:tRNA dimethylallyltransferase activity"/>
    <property type="evidence" value="ECO:0007669"/>
    <property type="project" value="UniProtKB-UniRule"/>
</dbReference>
<dbReference type="GO" id="GO:0006400">
    <property type="term" value="P:tRNA modification"/>
    <property type="evidence" value="ECO:0007669"/>
    <property type="project" value="TreeGrafter"/>
</dbReference>
<dbReference type="FunFam" id="1.10.20.140:FF:000001">
    <property type="entry name" value="tRNA dimethylallyltransferase"/>
    <property type="match status" value="1"/>
</dbReference>
<dbReference type="FunFam" id="1.10.287.890:FF:000001">
    <property type="entry name" value="tRNA dimethylallyltransferase"/>
    <property type="match status" value="1"/>
</dbReference>
<dbReference type="Gene3D" id="1.10.20.140">
    <property type="match status" value="1"/>
</dbReference>
<dbReference type="Gene3D" id="1.10.287.890">
    <property type="entry name" value="Crystal structure of tRNA isopentenylpyrophosphate transferase (bh2366) domain"/>
    <property type="match status" value="1"/>
</dbReference>
<dbReference type="Gene3D" id="3.40.50.300">
    <property type="entry name" value="P-loop containing nucleotide triphosphate hydrolases"/>
    <property type="match status" value="1"/>
</dbReference>
<dbReference type="HAMAP" id="MF_00185">
    <property type="entry name" value="IPP_trans"/>
    <property type="match status" value="1"/>
</dbReference>
<dbReference type="InterPro" id="IPR039657">
    <property type="entry name" value="Dimethylallyltransferase"/>
</dbReference>
<dbReference type="InterPro" id="IPR018022">
    <property type="entry name" value="IPT"/>
</dbReference>
<dbReference type="InterPro" id="IPR027417">
    <property type="entry name" value="P-loop_NTPase"/>
</dbReference>
<dbReference type="NCBIfam" id="TIGR00174">
    <property type="entry name" value="miaA"/>
    <property type="match status" value="1"/>
</dbReference>
<dbReference type="PANTHER" id="PTHR11088">
    <property type="entry name" value="TRNA DIMETHYLALLYLTRANSFERASE"/>
    <property type="match status" value="1"/>
</dbReference>
<dbReference type="PANTHER" id="PTHR11088:SF60">
    <property type="entry name" value="TRNA DIMETHYLALLYLTRANSFERASE"/>
    <property type="match status" value="1"/>
</dbReference>
<dbReference type="Pfam" id="PF01715">
    <property type="entry name" value="IPPT"/>
    <property type="match status" value="1"/>
</dbReference>
<dbReference type="SUPFAM" id="SSF52540">
    <property type="entry name" value="P-loop containing nucleoside triphosphate hydrolases"/>
    <property type="match status" value="1"/>
</dbReference>
<comment type="function">
    <text evidence="1">Catalyzes the transfer of a dimethylallyl group onto the adenine at position 37 in tRNAs that read codons beginning with uridine, leading to the formation of N6-(dimethylallyl)adenosine (i(6)A).</text>
</comment>
<comment type="catalytic activity">
    <reaction evidence="1">
        <text>adenosine(37) in tRNA + dimethylallyl diphosphate = N(6)-dimethylallyladenosine(37) in tRNA + diphosphate</text>
        <dbReference type="Rhea" id="RHEA:26482"/>
        <dbReference type="Rhea" id="RHEA-COMP:10162"/>
        <dbReference type="Rhea" id="RHEA-COMP:10375"/>
        <dbReference type="ChEBI" id="CHEBI:33019"/>
        <dbReference type="ChEBI" id="CHEBI:57623"/>
        <dbReference type="ChEBI" id="CHEBI:74411"/>
        <dbReference type="ChEBI" id="CHEBI:74415"/>
        <dbReference type="EC" id="2.5.1.75"/>
    </reaction>
</comment>
<comment type="cofactor">
    <cofactor evidence="1">
        <name>Mg(2+)</name>
        <dbReference type="ChEBI" id="CHEBI:18420"/>
    </cofactor>
</comment>
<comment type="subunit">
    <text evidence="1">Monomer.</text>
</comment>
<comment type="similarity">
    <text evidence="1">Belongs to the IPP transferase family.</text>
</comment>
<sequence length="316" mass="35022">MSDISKASLPKAIFLMGPTASGKTALAIELRKILPVELISVDSALIYKGMDIGTAKPNAEELLAAPHRLLDIRDPSQAYSAADFRRDALAEMADITAAGRIPLLVGGTMLYFKALLEGLSPLPSADPEVRARIEQQAAEQGWESLHRQLQEVDPVAAARIHPNDPQRLSRALEVFFISGKTLTELTQTSGDALPYQVHQFAIAPASRELLHQRIEQRFHQMLASGFEAEVRALFARGDLHTDLPSIRCVGYRQMWSYLEGEISYDEMVYLGVCATRQLAKRQITWLRGWEGVHWLDSEKPEQARDEVLQVVGAIAG</sequence>
<keyword id="KW-0067">ATP-binding</keyword>
<keyword id="KW-0460">Magnesium</keyword>
<keyword id="KW-0547">Nucleotide-binding</keyword>
<keyword id="KW-1185">Reference proteome</keyword>
<keyword id="KW-0808">Transferase</keyword>
<keyword id="KW-0819">tRNA processing</keyword>
<gene>
    <name evidence="1" type="primary">miaA</name>
    <name type="ordered locus">SDY_4418</name>
</gene>
<feature type="chain" id="PRO_1000020659" description="tRNA dimethylallyltransferase">
    <location>
        <begin position="1"/>
        <end position="316"/>
    </location>
</feature>
<feature type="region of interest" description="Interaction with substrate tRNA" evidence="1">
    <location>
        <begin position="42"/>
        <end position="45"/>
    </location>
</feature>
<feature type="region of interest" description="Interaction with substrate tRNA" evidence="1">
    <location>
        <begin position="166"/>
        <end position="170"/>
    </location>
</feature>
<feature type="region of interest" description="Interaction with substrate tRNA" evidence="1">
    <location>
        <begin position="247"/>
        <end position="252"/>
    </location>
</feature>
<feature type="region of interest" description="Interaction with substrate tRNA" evidence="1">
    <location>
        <begin position="280"/>
        <end position="287"/>
    </location>
</feature>
<feature type="binding site" evidence="1">
    <location>
        <begin position="17"/>
        <end position="24"/>
    </location>
    <ligand>
        <name>ATP</name>
        <dbReference type="ChEBI" id="CHEBI:30616"/>
    </ligand>
</feature>
<feature type="binding site" evidence="1">
    <location>
        <begin position="19"/>
        <end position="24"/>
    </location>
    <ligand>
        <name>substrate</name>
    </ligand>
</feature>
<feature type="site" description="Interaction with substrate tRNA" evidence="1">
    <location>
        <position position="108"/>
    </location>
</feature>
<feature type="site" description="Interaction with substrate tRNA" evidence="1">
    <location>
        <position position="130"/>
    </location>
</feature>
<organism>
    <name type="scientific">Shigella dysenteriae serotype 1 (strain Sd197)</name>
    <dbReference type="NCBI Taxonomy" id="300267"/>
    <lineage>
        <taxon>Bacteria</taxon>
        <taxon>Pseudomonadati</taxon>
        <taxon>Pseudomonadota</taxon>
        <taxon>Gammaproteobacteria</taxon>
        <taxon>Enterobacterales</taxon>
        <taxon>Enterobacteriaceae</taxon>
        <taxon>Shigella</taxon>
    </lineage>
</organism>
<accession>Q328F0</accession>